<protein>
    <recommendedName>
        <fullName evidence="1">tRNA pseudouridine synthase B</fullName>
        <ecNumber evidence="1">5.4.99.25</ecNumber>
    </recommendedName>
    <alternativeName>
        <fullName evidence="1">tRNA pseudouridine(55) synthase</fullName>
        <shortName evidence="1">Psi55 synthase</shortName>
    </alternativeName>
    <alternativeName>
        <fullName evidence="1">tRNA pseudouridylate synthase</fullName>
    </alternativeName>
    <alternativeName>
        <fullName evidence="1">tRNA-uridine isomerase</fullName>
    </alternativeName>
</protein>
<accession>A3NUL2</accession>
<gene>
    <name evidence="1" type="primary">truB</name>
    <name type="ordered locus">BURPS1106A_1764</name>
</gene>
<feature type="chain" id="PRO_1000084559" description="tRNA pseudouridine synthase B">
    <location>
        <begin position="1"/>
        <end position="302"/>
    </location>
</feature>
<feature type="active site" description="Nucleophile" evidence="1">
    <location>
        <position position="43"/>
    </location>
</feature>
<keyword id="KW-0413">Isomerase</keyword>
<keyword id="KW-0819">tRNA processing</keyword>
<organism>
    <name type="scientific">Burkholderia pseudomallei (strain 1106a)</name>
    <dbReference type="NCBI Taxonomy" id="357348"/>
    <lineage>
        <taxon>Bacteria</taxon>
        <taxon>Pseudomonadati</taxon>
        <taxon>Pseudomonadota</taxon>
        <taxon>Betaproteobacteria</taxon>
        <taxon>Burkholderiales</taxon>
        <taxon>Burkholderiaceae</taxon>
        <taxon>Burkholderia</taxon>
        <taxon>pseudomallei group</taxon>
    </lineage>
</organism>
<name>TRUB_BURP0</name>
<evidence type="ECO:0000255" key="1">
    <source>
        <dbReference type="HAMAP-Rule" id="MF_01080"/>
    </source>
</evidence>
<dbReference type="EC" id="5.4.99.25" evidence="1"/>
<dbReference type="EMBL" id="CP000572">
    <property type="protein sequence ID" value="ABN91255.1"/>
    <property type="molecule type" value="Genomic_DNA"/>
</dbReference>
<dbReference type="RefSeq" id="WP_004191673.1">
    <property type="nucleotide sequence ID" value="NC_009076.1"/>
</dbReference>
<dbReference type="SMR" id="A3NUL2"/>
<dbReference type="GeneID" id="93060075"/>
<dbReference type="KEGG" id="bpl:BURPS1106A_1764"/>
<dbReference type="HOGENOM" id="CLU_032087_0_3_4"/>
<dbReference type="Proteomes" id="UP000006738">
    <property type="component" value="Chromosome I"/>
</dbReference>
<dbReference type="GO" id="GO:0003723">
    <property type="term" value="F:RNA binding"/>
    <property type="evidence" value="ECO:0007669"/>
    <property type="project" value="InterPro"/>
</dbReference>
<dbReference type="GO" id="GO:0160148">
    <property type="term" value="F:tRNA pseudouridine(55) synthase activity"/>
    <property type="evidence" value="ECO:0007669"/>
    <property type="project" value="UniProtKB-EC"/>
</dbReference>
<dbReference type="GO" id="GO:1990481">
    <property type="term" value="P:mRNA pseudouridine synthesis"/>
    <property type="evidence" value="ECO:0007669"/>
    <property type="project" value="TreeGrafter"/>
</dbReference>
<dbReference type="GO" id="GO:0031119">
    <property type="term" value="P:tRNA pseudouridine synthesis"/>
    <property type="evidence" value="ECO:0007669"/>
    <property type="project" value="UniProtKB-UniRule"/>
</dbReference>
<dbReference type="CDD" id="cd02573">
    <property type="entry name" value="PseudoU_synth_EcTruB"/>
    <property type="match status" value="1"/>
</dbReference>
<dbReference type="CDD" id="cd21152">
    <property type="entry name" value="PUA_TruB_bacterial"/>
    <property type="match status" value="1"/>
</dbReference>
<dbReference type="FunFam" id="3.30.2350.10:FF:000011">
    <property type="entry name" value="tRNA pseudouridine synthase B"/>
    <property type="match status" value="1"/>
</dbReference>
<dbReference type="Gene3D" id="3.30.2350.10">
    <property type="entry name" value="Pseudouridine synthase"/>
    <property type="match status" value="1"/>
</dbReference>
<dbReference type="Gene3D" id="2.30.130.10">
    <property type="entry name" value="PUA domain"/>
    <property type="match status" value="1"/>
</dbReference>
<dbReference type="HAMAP" id="MF_01080">
    <property type="entry name" value="TruB_bact"/>
    <property type="match status" value="1"/>
</dbReference>
<dbReference type="InterPro" id="IPR020103">
    <property type="entry name" value="PsdUridine_synth_cat_dom_sf"/>
</dbReference>
<dbReference type="InterPro" id="IPR002501">
    <property type="entry name" value="PsdUridine_synth_N"/>
</dbReference>
<dbReference type="InterPro" id="IPR015947">
    <property type="entry name" value="PUA-like_sf"/>
</dbReference>
<dbReference type="InterPro" id="IPR036974">
    <property type="entry name" value="PUA_sf"/>
</dbReference>
<dbReference type="InterPro" id="IPR014780">
    <property type="entry name" value="tRNA_psdUridine_synth_TruB"/>
</dbReference>
<dbReference type="InterPro" id="IPR015240">
    <property type="entry name" value="tRNA_sdUridine_synth_fam1_C"/>
</dbReference>
<dbReference type="InterPro" id="IPR032819">
    <property type="entry name" value="TruB_C"/>
</dbReference>
<dbReference type="NCBIfam" id="TIGR00431">
    <property type="entry name" value="TruB"/>
    <property type="match status" value="1"/>
</dbReference>
<dbReference type="PANTHER" id="PTHR13767:SF2">
    <property type="entry name" value="PSEUDOURIDYLATE SYNTHASE TRUB1"/>
    <property type="match status" value="1"/>
</dbReference>
<dbReference type="PANTHER" id="PTHR13767">
    <property type="entry name" value="TRNA-PSEUDOURIDINE SYNTHASE"/>
    <property type="match status" value="1"/>
</dbReference>
<dbReference type="Pfam" id="PF09157">
    <property type="entry name" value="TruB-C_2"/>
    <property type="match status" value="1"/>
</dbReference>
<dbReference type="Pfam" id="PF16198">
    <property type="entry name" value="TruB_C_2"/>
    <property type="match status" value="1"/>
</dbReference>
<dbReference type="Pfam" id="PF01509">
    <property type="entry name" value="TruB_N"/>
    <property type="match status" value="1"/>
</dbReference>
<dbReference type="SUPFAM" id="SSF55120">
    <property type="entry name" value="Pseudouridine synthase"/>
    <property type="match status" value="1"/>
</dbReference>
<dbReference type="SUPFAM" id="SSF88697">
    <property type="entry name" value="PUA domain-like"/>
    <property type="match status" value="1"/>
</dbReference>
<reference key="1">
    <citation type="journal article" date="2010" name="Genome Biol. Evol.">
        <title>Continuing evolution of Burkholderia mallei through genome reduction and large-scale rearrangements.</title>
        <authorList>
            <person name="Losada L."/>
            <person name="Ronning C.M."/>
            <person name="DeShazer D."/>
            <person name="Woods D."/>
            <person name="Fedorova N."/>
            <person name="Kim H.S."/>
            <person name="Shabalina S.A."/>
            <person name="Pearson T.R."/>
            <person name="Brinkac L."/>
            <person name="Tan P."/>
            <person name="Nandi T."/>
            <person name="Crabtree J."/>
            <person name="Badger J."/>
            <person name="Beckstrom-Sternberg S."/>
            <person name="Saqib M."/>
            <person name="Schutzer S.E."/>
            <person name="Keim P."/>
            <person name="Nierman W.C."/>
        </authorList>
    </citation>
    <scope>NUCLEOTIDE SEQUENCE [LARGE SCALE GENOMIC DNA]</scope>
    <source>
        <strain>1106a</strain>
    </source>
</reference>
<comment type="function">
    <text evidence="1">Responsible for synthesis of pseudouridine from uracil-55 in the psi GC loop of transfer RNAs.</text>
</comment>
<comment type="catalytic activity">
    <reaction evidence="1">
        <text>uridine(55) in tRNA = pseudouridine(55) in tRNA</text>
        <dbReference type="Rhea" id="RHEA:42532"/>
        <dbReference type="Rhea" id="RHEA-COMP:10101"/>
        <dbReference type="Rhea" id="RHEA-COMP:10102"/>
        <dbReference type="ChEBI" id="CHEBI:65314"/>
        <dbReference type="ChEBI" id="CHEBI:65315"/>
        <dbReference type="EC" id="5.4.99.25"/>
    </reaction>
</comment>
<comment type="similarity">
    <text evidence="1">Belongs to the pseudouridine synthase TruB family. Type 1 subfamily.</text>
</comment>
<sequence length="302" mass="32277">MARRALDGVLLLDKPVGLSSNDALMRAKRLYQAKKAGHTGTLDPLASGLLPLCFGEATKFSQDLLEADKTYEATMRLGVRTTTGDAEGDVLDTRDVSCDEAAVRAALARFVGEIVQVPPMYSALKRDGKPLYEYARAGQTVEREGRTVTIRALALVSCALPDVTFRVTCSKGTYVRTLAEDIGEALGCGAHLTMLRRTGVGPLTLEHAVTLDALDAATQDERDARLAPVDALLSTFPCVKLDAALATRFLHGQRLKLSELAARPDAAEGGRVRVYDADDRLLGVARASEGVLAPERLVVTGA</sequence>
<proteinExistence type="inferred from homology"/>